<evidence type="ECO:0000255" key="1">
    <source>
        <dbReference type="HAMAP-Rule" id="MF_01140"/>
    </source>
</evidence>
<proteinExistence type="inferred from homology"/>
<sequence>MKKKILFWVLGILGVLIIGGGIYAYNVYSSVSNTLKEVHQPLKRDQNNSNVGEKVSKSEPVSILLLGADERGEDKGRSDSLMVITLNPKNNSMKTVSIPRDTYTEIVGKGKSDKINHAYAFGGVDMSVATVENFLNVPINYYIEVNMEGFKDIVDAVGGVDVKNDLEFTQDGHHFAKGNIHLTGDQALAFTRMRKQDPRGDFGRQMRQRQVMQGVIKKGASFSSLTGYGDVLSAIQKNVKTNLTQDQMFDMQKNYKDCLKNSEDIQIPGDGHKAADGIWYYYVPDAAKQDLTNKLRTHLEVTK</sequence>
<dbReference type="EC" id="2.7.8.-" evidence="1"/>
<dbReference type="EMBL" id="AE016879">
    <property type="protein sequence ID" value="AAP29152.1"/>
    <property type="molecule type" value="Genomic_DNA"/>
</dbReference>
<dbReference type="EMBL" id="AE017334">
    <property type="protein sequence ID" value="AAT34648.1"/>
    <property type="molecule type" value="Genomic_DNA"/>
</dbReference>
<dbReference type="EMBL" id="AE017225">
    <property type="protein sequence ID" value="AAT57404.1"/>
    <property type="molecule type" value="Genomic_DNA"/>
</dbReference>
<dbReference type="RefSeq" id="NP_847666.1">
    <property type="nucleotide sequence ID" value="NC_003997.3"/>
</dbReference>
<dbReference type="RefSeq" id="YP_031354.1">
    <property type="nucleotide sequence ID" value="NC_005945.1"/>
</dbReference>
<dbReference type="SMR" id="Q81K33"/>
<dbReference type="STRING" id="261594.GBAA_5506"/>
<dbReference type="DNASU" id="1085151"/>
<dbReference type="GeneID" id="45025096"/>
<dbReference type="KEGG" id="ban:BA_5506"/>
<dbReference type="KEGG" id="banh:HYU01_26880"/>
<dbReference type="KEGG" id="bar:GBAA_5506"/>
<dbReference type="KEGG" id="bat:BAS5115"/>
<dbReference type="PATRIC" id="fig|198094.11.peg.5465"/>
<dbReference type="eggNOG" id="COG1316">
    <property type="taxonomic scope" value="Bacteria"/>
</dbReference>
<dbReference type="HOGENOM" id="CLU_016455_2_2_9"/>
<dbReference type="OMA" id="QMKINAA"/>
<dbReference type="OrthoDB" id="27330at2"/>
<dbReference type="Proteomes" id="UP000000427">
    <property type="component" value="Chromosome"/>
</dbReference>
<dbReference type="Proteomes" id="UP000000594">
    <property type="component" value="Chromosome"/>
</dbReference>
<dbReference type="GO" id="GO:0005886">
    <property type="term" value="C:plasma membrane"/>
    <property type="evidence" value="ECO:0007669"/>
    <property type="project" value="UniProtKB-SubCell"/>
</dbReference>
<dbReference type="GO" id="GO:0016780">
    <property type="term" value="F:phosphotransferase activity, for other substituted phosphate groups"/>
    <property type="evidence" value="ECO:0007669"/>
    <property type="project" value="UniProtKB-UniRule"/>
</dbReference>
<dbReference type="GO" id="GO:0070726">
    <property type="term" value="P:cell wall assembly"/>
    <property type="evidence" value="ECO:0007669"/>
    <property type="project" value="UniProtKB-UniRule"/>
</dbReference>
<dbReference type="FunFam" id="3.40.630.190:FF:000003">
    <property type="entry name" value="Polyisoprenyl-teichoic acid--peptidoglycan teichoic acid transferase TagU"/>
    <property type="match status" value="1"/>
</dbReference>
<dbReference type="Gene3D" id="3.40.630.190">
    <property type="entry name" value="LCP protein"/>
    <property type="match status" value="1"/>
</dbReference>
<dbReference type="HAMAP" id="MF_01140">
    <property type="entry name" value="TagU_transferase"/>
    <property type="match status" value="1"/>
</dbReference>
<dbReference type="InterPro" id="IPR050922">
    <property type="entry name" value="LytR/CpsA/Psr_CW_biosynth"/>
</dbReference>
<dbReference type="InterPro" id="IPR004474">
    <property type="entry name" value="LytR_CpsA_psr"/>
</dbReference>
<dbReference type="InterPro" id="IPR023734">
    <property type="entry name" value="TagU"/>
</dbReference>
<dbReference type="NCBIfam" id="TIGR00350">
    <property type="entry name" value="lytR_cpsA_psr"/>
    <property type="match status" value="1"/>
</dbReference>
<dbReference type="NCBIfam" id="NF006897">
    <property type="entry name" value="PRK09379.1"/>
    <property type="match status" value="1"/>
</dbReference>
<dbReference type="PANTHER" id="PTHR33392">
    <property type="entry name" value="POLYISOPRENYL-TEICHOIC ACID--PEPTIDOGLYCAN TEICHOIC ACID TRANSFERASE TAGU"/>
    <property type="match status" value="1"/>
</dbReference>
<dbReference type="PANTHER" id="PTHR33392:SF6">
    <property type="entry name" value="POLYISOPRENYL-TEICHOIC ACID--PEPTIDOGLYCAN TEICHOIC ACID TRANSFERASE TAGU"/>
    <property type="match status" value="1"/>
</dbReference>
<dbReference type="Pfam" id="PF03816">
    <property type="entry name" value="LytR_cpsA_psr"/>
    <property type="match status" value="1"/>
</dbReference>
<feature type="chain" id="PRO_0000218495" description="Polyisoprenyl-teichoic acid--peptidoglycan teichoic acid transferase TagU">
    <location>
        <begin position="1"/>
        <end position="303"/>
    </location>
</feature>
<feature type="topological domain" description="Cytoplasmic" evidence="1">
    <location>
        <begin position="1"/>
        <end position="4"/>
    </location>
</feature>
<feature type="transmembrane region" description="Helical; Signal-anchor for type II membrane protein" evidence="1">
    <location>
        <begin position="5"/>
        <end position="25"/>
    </location>
</feature>
<feature type="topological domain" description="Extracellular" evidence="1">
    <location>
        <begin position="26"/>
        <end position="303"/>
    </location>
</feature>
<reference key="1">
    <citation type="journal article" date="2003" name="Nature">
        <title>The genome sequence of Bacillus anthracis Ames and comparison to closely related bacteria.</title>
        <authorList>
            <person name="Read T.D."/>
            <person name="Peterson S.N."/>
            <person name="Tourasse N.J."/>
            <person name="Baillie L.W."/>
            <person name="Paulsen I.T."/>
            <person name="Nelson K.E."/>
            <person name="Tettelin H."/>
            <person name="Fouts D.E."/>
            <person name="Eisen J.A."/>
            <person name="Gill S.R."/>
            <person name="Holtzapple E.K."/>
            <person name="Okstad O.A."/>
            <person name="Helgason E."/>
            <person name="Rilstone J."/>
            <person name="Wu M."/>
            <person name="Kolonay J.F."/>
            <person name="Beanan M.J."/>
            <person name="Dodson R.J."/>
            <person name="Brinkac L.M."/>
            <person name="Gwinn M.L."/>
            <person name="DeBoy R.T."/>
            <person name="Madpu R."/>
            <person name="Daugherty S.C."/>
            <person name="Durkin A.S."/>
            <person name="Haft D.H."/>
            <person name="Nelson W.C."/>
            <person name="Peterson J.D."/>
            <person name="Pop M."/>
            <person name="Khouri H.M."/>
            <person name="Radune D."/>
            <person name="Benton J.L."/>
            <person name="Mahamoud Y."/>
            <person name="Jiang L."/>
            <person name="Hance I.R."/>
            <person name="Weidman J.F."/>
            <person name="Berry K.J."/>
            <person name="Plaut R.D."/>
            <person name="Wolf A.M."/>
            <person name="Watkins K.L."/>
            <person name="Nierman W.C."/>
            <person name="Hazen A."/>
            <person name="Cline R.T."/>
            <person name="Redmond C."/>
            <person name="Thwaite J.E."/>
            <person name="White O."/>
            <person name="Salzberg S.L."/>
            <person name="Thomason B."/>
            <person name="Friedlander A.M."/>
            <person name="Koehler T.M."/>
            <person name="Hanna P.C."/>
            <person name="Kolstoe A.-B."/>
            <person name="Fraser C.M."/>
        </authorList>
    </citation>
    <scope>NUCLEOTIDE SEQUENCE [LARGE SCALE GENOMIC DNA]</scope>
    <source>
        <strain>Ames / isolate Porton</strain>
    </source>
</reference>
<reference key="2">
    <citation type="journal article" date="2009" name="J. Bacteriol.">
        <title>The complete genome sequence of Bacillus anthracis Ames 'Ancestor'.</title>
        <authorList>
            <person name="Ravel J."/>
            <person name="Jiang L."/>
            <person name="Stanley S.T."/>
            <person name="Wilson M.R."/>
            <person name="Decker R.S."/>
            <person name="Read T.D."/>
            <person name="Worsham P."/>
            <person name="Keim P.S."/>
            <person name="Salzberg S.L."/>
            <person name="Fraser-Liggett C.M."/>
            <person name="Rasko D.A."/>
        </authorList>
    </citation>
    <scope>NUCLEOTIDE SEQUENCE [LARGE SCALE GENOMIC DNA]</scope>
    <source>
        <strain>Ames ancestor</strain>
    </source>
</reference>
<reference key="3">
    <citation type="submission" date="2004-01" db="EMBL/GenBank/DDBJ databases">
        <title>Complete genome sequence of Bacillus anthracis Sterne.</title>
        <authorList>
            <person name="Brettin T.S."/>
            <person name="Bruce D."/>
            <person name="Challacombe J.F."/>
            <person name="Gilna P."/>
            <person name="Han C."/>
            <person name="Hill K."/>
            <person name="Hitchcock P."/>
            <person name="Jackson P."/>
            <person name="Keim P."/>
            <person name="Longmire J."/>
            <person name="Lucas S."/>
            <person name="Okinaka R."/>
            <person name="Richardson P."/>
            <person name="Rubin E."/>
            <person name="Tice H."/>
        </authorList>
    </citation>
    <scope>NUCLEOTIDE SEQUENCE [LARGE SCALE GENOMIC DNA]</scope>
    <source>
        <strain>Sterne</strain>
    </source>
</reference>
<protein>
    <recommendedName>
        <fullName evidence="1">Polyisoprenyl-teichoic acid--peptidoglycan teichoic acid transferase TagU</fullName>
        <ecNumber evidence="1">2.7.8.-</ecNumber>
    </recommendedName>
</protein>
<gene>
    <name evidence="1" type="primary">tagU</name>
    <name type="ordered locus">BA_5506</name>
    <name type="ordered locus">GBAA_5506</name>
    <name type="ordered locus">BAS5115</name>
</gene>
<accession>Q81K33</accession>
<accession>Q6HQN4</accession>
<accession>Q6KK07</accession>
<comment type="function">
    <text evidence="1">May catalyze the final step in cell wall teichoic acid biosynthesis, the transfer of the anionic cell wall polymers (APs) from their lipid-linked precursor to the cell wall peptidoglycan (PG).</text>
</comment>
<comment type="pathway">
    <text evidence="1">Cell wall biogenesis.</text>
</comment>
<comment type="subcellular location">
    <subcellularLocation>
        <location evidence="1">Cell membrane</location>
        <topology evidence="1">Single-pass type II membrane protein</topology>
    </subcellularLocation>
</comment>
<comment type="similarity">
    <text evidence="1">Belongs to the LytR/CpsA/Psr (LCP) family.</text>
</comment>
<organism>
    <name type="scientific">Bacillus anthracis</name>
    <dbReference type="NCBI Taxonomy" id="1392"/>
    <lineage>
        <taxon>Bacteria</taxon>
        <taxon>Bacillati</taxon>
        <taxon>Bacillota</taxon>
        <taxon>Bacilli</taxon>
        <taxon>Bacillales</taxon>
        <taxon>Bacillaceae</taxon>
        <taxon>Bacillus</taxon>
        <taxon>Bacillus cereus group</taxon>
    </lineage>
</organism>
<name>TAGU_BACAN</name>
<keyword id="KW-1003">Cell membrane</keyword>
<keyword id="KW-0961">Cell wall biogenesis/degradation</keyword>
<keyword id="KW-0472">Membrane</keyword>
<keyword id="KW-1185">Reference proteome</keyword>
<keyword id="KW-0735">Signal-anchor</keyword>
<keyword id="KW-0808">Transferase</keyword>
<keyword id="KW-0812">Transmembrane</keyword>
<keyword id="KW-1133">Transmembrane helix</keyword>